<reference key="1">
    <citation type="submission" date="2008-08" db="EMBL/GenBank/DDBJ databases">
        <title>Complete sequence of Acidithiobacillus ferrooxidans ATCC 53993.</title>
        <authorList>
            <person name="Lucas S."/>
            <person name="Copeland A."/>
            <person name="Lapidus A."/>
            <person name="Glavina del Rio T."/>
            <person name="Dalin E."/>
            <person name="Tice H."/>
            <person name="Bruce D."/>
            <person name="Goodwin L."/>
            <person name="Pitluck S."/>
            <person name="Sims D."/>
            <person name="Brettin T."/>
            <person name="Detter J.C."/>
            <person name="Han C."/>
            <person name="Kuske C.R."/>
            <person name="Larimer F."/>
            <person name="Land M."/>
            <person name="Hauser L."/>
            <person name="Kyrpides N."/>
            <person name="Lykidis A."/>
            <person name="Borole A.P."/>
        </authorList>
    </citation>
    <scope>NUCLEOTIDE SEQUENCE [LARGE SCALE GENOMIC DNA]</scope>
    <source>
        <strain>ATCC 53993 / BNL-5-31</strain>
    </source>
</reference>
<accession>B5EMC8</accession>
<name>RIMP_ACIF5</name>
<keyword id="KW-0963">Cytoplasm</keyword>
<keyword id="KW-0690">Ribosome biogenesis</keyword>
<protein>
    <recommendedName>
        <fullName evidence="1">Ribosome maturation factor RimP</fullName>
    </recommendedName>
</protein>
<gene>
    <name evidence="1" type="primary">rimP</name>
    <name type="ordered locus">Lferr_0553</name>
</gene>
<proteinExistence type="inferred from homology"/>
<organism>
    <name type="scientific">Acidithiobacillus ferrooxidans (strain ATCC 53993 / BNL-5-31)</name>
    <name type="common">Leptospirillum ferrooxidans (ATCC 53993)</name>
    <dbReference type="NCBI Taxonomy" id="380394"/>
    <lineage>
        <taxon>Bacteria</taxon>
        <taxon>Pseudomonadati</taxon>
        <taxon>Pseudomonadota</taxon>
        <taxon>Acidithiobacillia</taxon>
        <taxon>Acidithiobacillales</taxon>
        <taxon>Acidithiobacillaceae</taxon>
        <taxon>Acidithiobacillus</taxon>
    </lineage>
</organism>
<comment type="function">
    <text evidence="1">Required for maturation of 30S ribosomal subunits.</text>
</comment>
<comment type="subcellular location">
    <subcellularLocation>
        <location evidence="1">Cytoplasm</location>
    </subcellularLocation>
</comment>
<comment type="similarity">
    <text evidence="1">Belongs to the RimP family.</text>
</comment>
<feature type="chain" id="PRO_0000384586" description="Ribosome maturation factor RimP">
    <location>
        <begin position="1"/>
        <end position="153"/>
    </location>
</feature>
<dbReference type="EMBL" id="CP001132">
    <property type="protein sequence ID" value="ACH82807.1"/>
    <property type="molecule type" value="Genomic_DNA"/>
</dbReference>
<dbReference type="RefSeq" id="WP_009567336.1">
    <property type="nucleotide sequence ID" value="NC_011206.1"/>
</dbReference>
<dbReference type="SMR" id="B5EMC8"/>
<dbReference type="GeneID" id="65279765"/>
<dbReference type="KEGG" id="afe:Lferr_0553"/>
<dbReference type="eggNOG" id="COG0779">
    <property type="taxonomic scope" value="Bacteria"/>
</dbReference>
<dbReference type="HOGENOM" id="CLU_070525_0_1_6"/>
<dbReference type="GO" id="GO:0005829">
    <property type="term" value="C:cytosol"/>
    <property type="evidence" value="ECO:0007669"/>
    <property type="project" value="TreeGrafter"/>
</dbReference>
<dbReference type="GO" id="GO:0000028">
    <property type="term" value="P:ribosomal small subunit assembly"/>
    <property type="evidence" value="ECO:0007669"/>
    <property type="project" value="TreeGrafter"/>
</dbReference>
<dbReference type="GO" id="GO:0006412">
    <property type="term" value="P:translation"/>
    <property type="evidence" value="ECO:0007669"/>
    <property type="project" value="TreeGrafter"/>
</dbReference>
<dbReference type="CDD" id="cd01734">
    <property type="entry name" value="YlxS_C"/>
    <property type="match status" value="1"/>
</dbReference>
<dbReference type="FunFam" id="3.30.300.70:FF:000001">
    <property type="entry name" value="Ribosome maturation factor RimP"/>
    <property type="match status" value="1"/>
</dbReference>
<dbReference type="Gene3D" id="2.30.30.180">
    <property type="entry name" value="Ribosome maturation factor RimP, C-terminal domain"/>
    <property type="match status" value="1"/>
</dbReference>
<dbReference type="Gene3D" id="3.30.300.70">
    <property type="entry name" value="RimP-like superfamily, N-terminal"/>
    <property type="match status" value="1"/>
</dbReference>
<dbReference type="HAMAP" id="MF_01077">
    <property type="entry name" value="RimP"/>
    <property type="match status" value="1"/>
</dbReference>
<dbReference type="InterPro" id="IPR003728">
    <property type="entry name" value="Ribosome_maturation_RimP"/>
</dbReference>
<dbReference type="InterPro" id="IPR028998">
    <property type="entry name" value="RimP_C"/>
</dbReference>
<dbReference type="InterPro" id="IPR036847">
    <property type="entry name" value="RimP_C_sf"/>
</dbReference>
<dbReference type="InterPro" id="IPR028989">
    <property type="entry name" value="RimP_N"/>
</dbReference>
<dbReference type="InterPro" id="IPR035956">
    <property type="entry name" value="RimP_N_sf"/>
</dbReference>
<dbReference type="PANTHER" id="PTHR33867">
    <property type="entry name" value="RIBOSOME MATURATION FACTOR RIMP"/>
    <property type="match status" value="1"/>
</dbReference>
<dbReference type="PANTHER" id="PTHR33867:SF1">
    <property type="entry name" value="RIBOSOME MATURATION FACTOR RIMP"/>
    <property type="match status" value="1"/>
</dbReference>
<dbReference type="Pfam" id="PF17384">
    <property type="entry name" value="DUF150_C"/>
    <property type="match status" value="1"/>
</dbReference>
<dbReference type="Pfam" id="PF02576">
    <property type="entry name" value="RimP_N"/>
    <property type="match status" value="1"/>
</dbReference>
<dbReference type="SUPFAM" id="SSF74942">
    <property type="entry name" value="YhbC-like, C-terminal domain"/>
    <property type="match status" value="1"/>
</dbReference>
<dbReference type="SUPFAM" id="SSF75420">
    <property type="entry name" value="YhbC-like, N-terminal domain"/>
    <property type="match status" value="1"/>
</dbReference>
<sequence>MVNVEDRLYEGIAQQAGIAGCTLVDARMVRTGRAVALQVFIEKDETTAVTIEDCAAVSRQLSLWLDVENPIHGAYRLEVSSPGLDRPLKNLHDFERFKGSQAEIHLHGLTQGRRRLQGELLGVEDQKIVLKNAEGRWTFALDDIHKARLVPQW</sequence>
<evidence type="ECO:0000255" key="1">
    <source>
        <dbReference type="HAMAP-Rule" id="MF_01077"/>
    </source>
</evidence>